<keyword id="KW-0002">3D-structure</keyword>
<keyword id="KW-0007">Acetylation</keyword>
<keyword id="KW-0025">Alternative splicing</keyword>
<keyword id="KW-0898">Cataract</keyword>
<keyword id="KW-0903">Direct protein sequencing</keyword>
<keyword id="KW-0225">Disease variant</keyword>
<keyword id="KW-0256">Endoplasmic reticulum</keyword>
<keyword id="KW-1063">Hypotrichosis</keyword>
<keyword id="KW-0991">Intellectual disability</keyword>
<keyword id="KW-0413">Isomerase</keyword>
<keyword id="KW-0444">Lipid biosynthesis</keyword>
<keyword id="KW-0443">Lipid metabolism</keyword>
<keyword id="KW-0472">Membrane</keyword>
<keyword id="KW-1267">Proteomics identification</keyword>
<keyword id="KW-1185">Reference proteome</keyword>
<keyword id="KW-0677">Repeat</keyword>
<keyword id="KW-0752">Steroid biosynthesis</keyword>
<sequence length="732" mass="83309">MTEGTCLRRRGGPYKTEPATDLGRWRLNCERGRQTWTYLQDERAGREQTGLEAYALGLDTKNYFKDLPKAHTAFEGALNGMTFYVGLQAEDGHWTGDYGGPLFLLPGLLITCHVARIPLPAGYREEIVRYLRSVQLPDGGWGLHIEDKSTVFGTALNYVSLRILGVGPDDPDLVRARNILHKKGGAVAIPSWGKFWLAVLNVYSWEGLNTLFPEMWLFPDWAPAHPSTLWCHCRQVYLPMSYCYAVRLSAAEDPLVQSLRQELYVEDFASIDWLAQRNNVAPDELYTPHSWLLRVVYALLNLYEHHHSAHLRQRAVQKLYEHIVADDRFTKSISIGPISKTINMLVRWYVDGPASTAFQEHVSRIPDYLWMGLDGMKMQGTNGSQIWDTAFAIQALLEAGGHHRPEFSSCLQKAHEFLRLSQVPDNPPDYQKYYRQMRKGGFSFSTLDCGWIVSDCTAEALKAVLLLQEKCPHVTEHIPRERLCDAVAVLLNMRNPDGGFATYETKRGGHLLELLNPSEVFGDIMIDYTYVECTSAVMQALKYFHKRFPEHRAAEIRETLTQGLEFCRRQQRADGSWEGSWGVCFTYGTWFGLEAFACMGQTYRDGTACAEVSRACDFLLSRQMADGGWGEDFESCEERRYLQSAQSQIHNTCWAMMGLMAVRHPDIEAQERGVRCLLEKQLPNGDWPQENIAGVFNKSCAISYTSYRNIFPIWALGRFSQLYPERALAGHP</sequence>
<protein>
    <recommendedName>
        <fullName>Lanosterol synthase</fullName>
        <ecNumber evidence="3 6 10">5.4.99.7</ecNumber>
    </recommendedName>
    <alternativeName>
        <fullName>2,3-epoxysqualene--lanosterol cyclase</fullName>
    </alternativeName>
    <alternativeName>
        <fullName>Oxidosqualene--lanosterol cyclase</fullName>
        <shortName>OSC</shortName>
        <shortName>hOSC</shortName>
    </alternativeName>
</protein>
<comment type="function">
    <text evidence="3 6 10">Key enzyme in the cholesterol biosynthesis pathway. Catalyzes the cyclization of (S)-2,3 oxidosqualene to lanosterol, a reaction that forms the sterol nucleus (PubMed:14766201, PubMed:26200341, PubMed:7639730). Through the production of lanosterol may regulate lens protein aggregation and increase transparency (PubMed:26200341).</text>
</comment>
<comment type="catalytic activity">
    <reaction evidence="3 6 10">
        <text>(S)-2,3-epoxysqualene = lanosterol</text>
        <dbReference type="Rhea" id="RHEA:14621"/>
        <dbReference type="ChEBI" id="CHEBI:15441"/>
        <dbReference type="ChEBI" id="CHEBI:16521"/>
        <dbReference type="EC" id="5.4.99.7"/>
    </reaction>
    <physiologicalReaction direction="left-to-right" evidence="15">
        <dbReference type="Rhea" id="RHEA:14622"/>
    </physiologicalReaction>
</comment>
<comment type="pathway">
    <text>Terpene metabolism; lanosterol biosynthesis; lanosterol from farnesyl diphosphate: step 3/3.</text>
</comment>
<comment type="subunit">
    <text evidence="3">Monomer.</text>
</comment>
<comment type="interaction">
    <interactant intactId="EBI-3930711">
        <id>P48449</id>
    </interactant>
    <interactant intactId="EBI-13059134">
        <id>Q13520</id>
        <label>AQP6</label>
    </interactant>
    <organismsDiffer>false</organismsDiffer>
    <experiments>3</experiments>
</comment>
<comment type="interaction">
    <interactant intactId="EBI-3930711">
        <id>P48449</id>
    </interactant>
    <interactant intactId="EBI-372594">
        <id>Q99828</id>
        <label>CIB1</label>
    </interactant>
    <organismsDiffer>false</organismsDiffer>
    <experiments>3</experiments>
</comment>
<comment type="interaction">
    <interactant intactId="EBI-3930711">
        <id>P48449</id>
    </interactant>
    <interactant intactId="EBI-3923031">
        <id>Q14973</id>
        <label>SLC10A1</label>
    </interactant>
    <organismsDiffer>false</organismsDiffer>
    <experiments>3</experiments>
</comment>
<comment type="interaction">
    <interactant intactId="EBI-3930711">
        <id>P48449</id>
    </interactant>
    <interactant intactId="EBI-18159983">
        <id>Q3KNW5</id>
        <label>SLC10A6</label>
    </interactant>
    <organismsDiffer>false</organismsDiffer>
    <experiments>3</experiments>
</comment>
<comment type="interaction">
    <interactant intactId="EBI-3930711">
        <id>P48449</id>
    </interactant>
    <interactant intactId="EBI-17684533">
        <id>Q9NRX6</id>
        <label>TMEM167B</label>
    </interactant>
    <organismsDiffer>false</organismsDiffer>
    <experiments>3</experiments>
</comment>
<comment type="interaction">
    <interactant intactId="EBI-3930711">
        <id>P48449</id>
    </interactant>
    <interactant intactId="EBI-2548832">
        <id>Q8N661</id>
        <label>TMEM86B</label>
    </interactant>
    <organismsDiffer>false</organismsDiffer>
    <experiments>3</experiments>
</comment>
<comment type="interaction">
    <interactant intactId="EBI-3930711">
        <id>P48449</id>
    </interactant>
    <interactant intactId="EBI-2799703">
        <id>O95070</id>
        <label>YIF1A</label>
    </interactant>
    <organismsDiffer>false</organismsDiffer>
    <experiments>3</experiments>
</comment>
<comment type="subcellular location">
    <subcellularLocation>
        <location evidence="3 5 8">Endoplasmic reticulum membrane</location>
        <topology evidence="3 5">Peripheral membrane protein</topology>
    </subcellularLocation>
</comment>
<comment type="alternative products">
    <event type="alternative splicing"/>
    <isoform>
        <id>P48449-1</id>
        <name>1</name>
        <sequence type="displayed"/>
    </isoform>
    <isoform>
        <id>P48449-2</id>
        <name>2</name>
        <sequence type="described" ref="VSP_045407"/>
    </isoform>
    <isoform>
        <id>P48449-3</id>
        <name>3</name>
        <sequence type="described" ref="VSP_046188"/>
    </isoform>
</comment>
<comment type="tissue specificity">
    <text evidence="8">Widely expressed. Expressed in the hair bulb, the outer root sheath and hair matrix of the hair follicle epithelium. Also detected in dermal papilla, epidermis, sweat glands, sebaceous glands, and blood vessels.</text>
</comment>
<comment type="disease" evidence="6 7">
    <disease id="DI-04502">
        <name>Cataract 44</name>
        <acronym>CTRCT44</acronym>
        <description>An opacification of the crystalline lens of the eye that frequently results in visual impairment or blindness. Opacities vary in morphology, are often confined to a portion of the lens, and may be static or progressive. In general, the more posteriorly located and dense an opacity, the greater the impact on visual function.</description>
        <dbReference type="MIM" id="616509"/>
    </disease>
    <text>The disease is caused by variants affecting the gene represented in this entry.</text>
</comment>
<comment type="disease" evidence="8">
    <disease id="DI-05448">
        <name>Hypotrichosis 14</name>
        <acronym>HYPT14</acronym>
        <description>A form of hypotrichosis, a condition characterized by the presence of less than the normal amount of hair and abnormal hair follicles and shafts, which are thin and atrophic. The extent of scalp and body hair involvement can be very variable, within as well as between families. HYPT14 is an autosomal recessive form characterized by sparse to absent lanugo-like scalp hair, sparse and brittle eyebrows, and sparse eyelashes and body hair.</description>
        <dbReference type="MIM" id="618275"/>
    </disease>
    <text>The disease is caused by variants affecting the gene represented in this entry.</text>
</comment>
<comment type="disease" evidence="8 9">
    <disease id="DI-05812">
        <name>Alopecia-intellectual disability syndrome 4</name>
        <acronym>APMR4</acronym>
        <description>An autosomal recessive disorder characterized by alopecia universalis, scaly skin, mild to severe intellectual disability, delayed or absent speech, and motor delay.</description>
        <dbReference type="MIM" id="618840"/>
    </disease>
    <text>The disease is caused by variants affecting the gene represented in this entry.</text>
</comment>
<comment type="similarity">
    <text evidence="14">Belongs to the terpene cyclase/mutase family.</text>
</comment>
<feature type="initiator methionine" description="Removed" evidence="3 17">
    <location>
        <position position="1"/>
    </location>
</feature>
<feature type="chain" id="PRO_0000072659" description="Lanosterol synthase">
    <location>
        <begin position="2"/>
        <end position="732"/>
    </location>
</feature>
<feature type="repeat" description="PFTB 1" evidence="1">
    <location>
        <begin position="77"/>
        <end position="121"/>
    </location>
</feature>
<feature type="repeat" description="PFTB 2" evidence="1">
    <location>
        <begin position="124"/>
        <end position="165"/>
    </location>
</feature>
<feature type="repeat" description="PFTB 3" evidence="1">
    <location>
        <begin position="424"/>
        <end position="468"/>
    </location>
</feature>
<feature type="repeat" description="PFTB 4" evidence="1">
    <location>
        <begin position="483"/>
        <end position="528"/>
    </location>
</feature>
<feature type="repeat" description="PFTB 5" evidence="1">
    <location>
        <begin position="560"/>
        <end position="600"/>
    </location>
</feature>
<feature type="repeat" description="PFTB 6" evidence="1">
    <location>
        <begin position="612"/>
        <end position="653"/>
    </location>
</feature>
<feature type="repeat" description="PFTB 7" evidence="1">
    <location>
        <begin position="670"/>
        <end position="712"/>
    </location>
</feature>
<feature type="active site" description="Proton donor" evidence="16">
    <location>
        <position position="455"/>
    </location>
</feature>
<feature type="site" description="Transition state stabilizer" evidence="5">
    <location>
        <position position="387"/>
    </location>
</feature>
<feature type="site" description="Transition state stabilizer" evidence="5">
    <location>
        <position position="444"/>
    </location>
</feature>
<feature type="site" description="Transition state stabilizer" evidence="5">
    <location>
        <position position="581"/>
    </location>
</feature>
<feature type="modified residue" description="N-acetylthreonine" evidence="17">
    <location>
        <position position="2"/>
    </location>
</feature>
<feature type="splice variant" id="VSP_045407" description="In isoform 2." evidence="13">
    <location>
        <begin position="1"/>
        <end position="80"/>
    </location>
</feature>
<feature type="splice variant" id="VSP_046188" description="In isoform 3." evidence="12">
    <location>
        <begin position="133"/>
        <end position="143"/>
    </location>
</feature>
<feature type="sequence variant" id="VAR_084019" description="In APMR4; uncertain significance." evidence="9">
    <original>G</original>
    <variation>D</variation>
    <location>
        <position position="12"/>
    </location>
</feature>
<feature type="sequence variant" id="VAR_084020" description="In APMR4; uncertain significance." evidence="9">
    <original>Y</original>
    <variation>C</variation>
    <location>
        <position position="14"/>
    </location>
</feature>
<feature type="sequence variant" id="VAR_081921" description="In HYPT14; the protein is present in the ER but also mislocalized to the cytoplasm." evidence="8">
    <original>L</original>
    <variation>V</variation>
    <location>
        <position position="102"/>
    </location>
</feature>
<feature type="sequence variant" id="VAR_081922" description="In APMR4; loss of protein expression." evidence="8">
    <location>
        <begin position="141"/>
        <end position="732"/>
    </location>
</feature>
<feature type="sequence variant" id="VAR_024648" description="In dbSNP:rs2839158.">
    <original>R</original>
    <variation>Q</variation>
    <location>
        <position position="175"/>
    </location>
</feature>
<feature type="sequence variant" id="VAR_081923" description="In APMR4; changed localization; the protein is present in the ER but is also mislocalized to the cytoplasm; dbSNP:rs754230211." evidence="8">
    <original>N</original>
    <variation>Y</variation>
    <location>
        <position position="209"/>
    </location>
</feature>
<feature type="sequence variant" id="VAR_081924" description="In HYPT14; changed localization; the protein is present in the ER but is also mislocalized to the cytoplasm; dbSNP:rs1260995701." evidence="8">
    <original>L</original>
    <variation>P</variation>
    <location>
        <position position="248"/>
    </location>
</feature>
<feature type="sequence variant" id="VAR_084021" description="In APMR4; uncertain significance." evidence="9">
    <original>R</original>
    <variation>P</variation>
    <location>
        <position position="260"/>
    </location>
</feature>
<feature type="sequence variant" id="VAR_084022" description="In APMR4; uncertain significance." evidence="9">
    <original>Y</original>
    <variation>C</variation>
    <location>
        <position position="286"/>
    </location>
</feature>
<feature type="sequence variant" id="VAR_052057" description="In dbSNP:rs34115287.">
    <original>H</original>
    <variation>R</variation>
    <location>
        <position position="310"/>
    </location>
</feature>
<feature type="sequence variant" id="VAR_084023" description="In CTRCT44; uncertain significance." evidence="7">
    <original>I</original>
    <variation>S</variation>
    <location>
        <position position="342"/>
    </location>
</feature>
<feature type="sequence variant" id="VAR_081925" description="In HYPT14; changed localization; the protein is present in the ER but is also mislocalized to the cytoplasm; dbSNP:rs1249530918." evidence="8">
    <original>F</original>
    <variation>S</variation>
    <location>
        <position position="391"/>
    </location>
</feature>
<feature type="sequence variant" id="VAR_084024" description="In APMR4; uncertain significance." evidence="9">
    <original>N</original>
    <variation>S</variation>
    <location>
        <position position="516"/>
    </location>
</feature>
<feature type="sequence variant" id="VAR_075664" description="In CTRCT44; loss of lanosterol synthase activity; dbSNP:rs864622780." evidence="6">
    <original>W</original>
    <variation>R</variation>
    <location>
        <position position="581"/>
    </location>
</feature>
<feature type="sequence variant" id="VAR_075665" description="In CTRCT44; loss of lanosterol synthase activity; dbSNP:rs561449819." evidence="6">
    <original>G</original>
    <variation>S</variation>
    <location>
        <position position="588"/>
    </location>
</feature>
<feature type="sequence variant" id="VAR_084025" description="In APMR4; uncertain significance." evidence="9">
    <location>
        <begin position="604"/>
        <end position="732"/>
    </location>
</feature>
<feature type="sequence variant" id="VAR_052058" description="In dbSNP:rs35785446.">
    <original>R</original>
    <variation>W</variation>
    <location>
        <position position="614"/>
    </location>
</feature>
<feature type="sequence variant" id="VAR_084026" description="In CTRCT44; uncertain significance." evidence="7">
    <original>W</original>
    <variation>C</variation>
    <location>
        <position position="629"/>
    </location>
</feature>
<feature type="sequence variant" id="VAR_021522" description="In dbSNP:rs2254524." evidence="2 4 11">
    <original>L</original>
    <variation>V</variation>
    <location>
        <position position="642"/>
    </location>
</feature>
<feature type="sequence variant" id="VAR_084027" description="In APMR4; uncertain significance." evidence="9">
    <original>T</original>
    <variation>I</variation>
    <location>
        <position position="652"/>
    </location>
</feature>
<feature type="sequence variant" id="VAR_052059" description="In dbSNP:rs17293705.">
    <original>P</original>
    <variation>L</variation>
    <location>
        <position position="688"/>
    </location>
</feature>
<feature type="sequence variant" id="VAR_084028" description="In APMR4; uncertain significance." evidence="9">
    <original>T</original>
    <variation>K</variation>
    <location>
        <position position="705"/>
    </location>
</feature>
<feature type="sequence conflict" description="In Ref. 4; CAB42828." evidence="14" ref="4">
    <original>W</original>
    <variation>R</variation>
    <location>
        <position position="348"/>
    </location>
</feature>
<feature type="helix" evidence="19">
    <location>
        <begin position="22"/>
        <end position="24"/>
    </location>
</feature>
<feature type="strand" evidence="19">
    <location>
        <begin position="25"/>
        <end position="30"/>
    </location>
</feature>
<feature type="strand" evidence="19">
    <location>
        <begin position="33"/>
        <end position="38"/>
    </location>
</feature>
<feature type="strand" evidence="18">
    <location>
        <begin position="40"/>
        <end position="45"/>
    </location>
</feature>
<feature type="helix" evidence="19">
    <location>
        <begin position="50"/>
        <end position="56"/>
    </location>
</feature>
<feature type="turn" evidence="19">
    <location>
        <begin position="61"/>
        <end position="63"/>
    </location>
</feature>
<feature type="helix" evidence="19">
    <location>
        <begin position="73"/>
        <end position="85"/>
    </location>
</feature>
<feature type="strand" evidence="19">
    <location>
        <begin position="101"/>
        <end position="103"/>
    </location>
</feature>
<feature type="helix" evidence="19">
    <location>
        <begin position="104"/>
        <end position="115"/>
    </location>
</feature>
<feature type="helix" evidence="19">
    <location>
        <begin position="123"/>
        <end position="134"/>
    </location>
</feature>
<feature type="helix" evidence="19">
    <location>
        <begin position="151"/>
        <end position="163"/>
    </location>
</feature>
<feature type="helix" evidence="19">
    <location>
        <begin position="171"/>
        <end position="182"/>
    </location>
</feature>
<feature type="helix" evidence="19">
    <location>
        <begin position="186"/>
        <end position="188"/>
    </location>
</feature>
<feature type="helix" evidence="19">
    <location>
        <begin position="191"/>
        <end position="199"/>
    </location>
</feature>
<feature type="helix" evidence="19">
    <location>
        <begin position="205"/>
        <end position="207"/>
    </location>
</feature>
<feature type="helix" evidence="19">
    <location>
        <begin position="213"/>
        <end position="217"/>
    </location>
</feature>
<feature type="helix" evidence="19">
    <location>
        <begin position="226"/>
        <end position="228"/>
    </location>
</feature>
<feature type="helix" evidence="19">
    <location>
        <begin position="231"/>
        <end position="245"/>
    </location>
</feature>
<feature type="helix" evidence="19">
    <location>
        <begin position="254"/>
        <end position="260"/>
    </location>
</feature>
<feature type="helix" evidence="19">
    <location>
        <begin position="268"/>
        <end position="270"/>
    </location>
</feature>
<feature type="helix" evidence="19">
    <location>
        <begin position="274"/>
        <end position="276"/>
    </location>
</feature>
<feature type="helix" evidence="19">
    <location>
        <begin position="282"/>
        <end position="284"/>
    </location>
</feature>
<feature type="helix" evidence="19">
    <location>
        <begin position="291"/>
        <end position="305"/>
    </location>
</feature>
<feature type="helix" evidence="19">
    <location>
        <begin position="309"/>
        <end position="330"/>
    </location>
</feature>
<feature type="helix" evidence="19">
    <location>
        <begin position="337"/>
        <end position="351"/>
    </location>
</feature>
<feature type="helix" evidence="19">
    <location>
        <begin position="356"/>
        <end position="363"/>
    </location>
</feature>
<feature type="helix" evidence="19">
    <location>
        <begin position="366"/>
        <end position="368"/>
    </location>
</feature>
<feature type="strand" evidence="19">
    <location>
        <begin position="369"/>
        <end position="372"/>
    </location>
</feature>
<feature type="strand" evidence="19">
    <location>
        <begin position="375"/>
        <end position="378"/>
    </location>
</feature>
<feature type="strand" evidence="19">
    <location>
        <begin position="380"/>
        <end position="382"/>
    </location>
</feature>
<feature type="helix" evidence="19">
    <location>
        <begin position="385"/>
        <end position="398"/>
    </location>
</feature>
<feature type="helix" evidence="19">
    <location>
        <begin position="401"/>
        <end position="403"/>
    </location>
</feature>
<feature type="helix" evidence="19">
    <location>
        <begin position="405"/>
        <end position="407"/>
    </location>
</feature>
<feature type="helix" evidence="19">
    <location>
        <begin position="408"/>
        <end position="421"/>
    </location>
</feature>
<feature type="helix" evidence="19">
    <location>
        <begin position="430"/>
        <end position="433"/>
    </location>
</feature>
<feature type="strand" evidence="19">
    <location>
        <begin position="443"/>
        <end position="445"/>
    </location>
</feature>
<feature type="turn" evidence="19">
    <location>
        <begin position="447"/>
        <end position="449"/>
    </location>
</feature>
<feature type="helix" evidence="19">
    <location>
        <begin position="454"/>
        <end position="470"/>
    </location>
</feature>
<feature type="helix" evidence="19">
    <location>
        <begin position="480"/>
        <end position="491"/>
    </location>
</feature>
<feature type="strand" evidence="19">
    <location>
        <begin position="502"/>
        <end position="504"/>
    </location>
</feature>
<feature type="helix" evidence="19">
    <location>
        <begin position="510"/>
        <end position="515"/>
    </location>
</feature>
<feature type="helix" evidence="19">
    <location>
        <begin position="531"/>
        <end position="547"/>
    </location>
</feature>
<feature type="helix" evidence="19">
    <location>
        <begin position="553"/>
        <end position="570"/>
    </location>
</feature>
<feature type="strand" evidence="19">
    <location>
        <begin position="580"/>
        <end position="584"/>
    </location>
</feature>
<feature type="helix" evidence="19">
    <location>
        <begin position="585"/>
        <end position="598"/>
    </location>
</feature>
<feature type="helix" evidence="19">
    <location>
        <begin position="610"/>
        <end position="620"/>
    </location>
</feature>
<feature type="helix" evidence="19">
    <location>
        <begin position="634"/>
        <end position="638"/>
    </location>
</feature>
<feature type="helix" evidence="19">
    <location>
        <begin position="649"/>
        <end position="661"/>
    </location>
</feature>
<feature type="helix" evidence="19">
    <location>
        <begin position="667"/>
        <end position="680"/>
    </location>
</feature>
<feature type="strand" evidence="19">
    <location>
        <begin position="694"/>
        <end position="696"/>
    </location>
</feature>
<feature type="turn" evidence="19">
    <location>
        <begin position="697"/>
        <end position="699"/>
    </location>
</feature>
<feature type="strand" evidence="19">
    <location>
        <begin position="700"/>
        <end position="702"/>
    </location>
</feature>
<feature type="helix" evidence="19">
    <location>
        <begin position="707"/>
        <end position="722"/>
    </location>
</feature>
<feature type="helix" evidence="19">
    <location>
        <begin position="727"/>
        <end position="729"/>
    </location>
</feature>
<reference key="1">
    <citation type="journal article" date="1995" name="Biochem. Biophys. Res. Commun.">
        <title>Molecular cloning of the human gene encoding lanosterol synthase from a liver cDNA library.</title>
        <authorList>
            <person name="Baker C.H."/>
            <person name="Matsuda S.P.T."/>
            <person name="Liu D.R."/>
            <person name="Corey E.J."/>
        </authorList>
    </citation>
    <scope>NUCLEOTIDE SEQUENCE [MRNA] (ISOFORM 1)</scope>
    <scope>FUNCTION</scope>
    <scope>CATALYTIC ACTIVITY</scope>
    <source>
        <tissue>Liver</tissue>
    </source>
</reference>
<reference key="2">
    <citation type="journal article" date="1995" name="Biol. Pharm. Bull.">
        <title>Molecular cloning of cDNA encoding human lanosterol synthase.</title>
        <authorList>
            <person name="Sung C.K."/>
            <person name="Shibuya M."/>
            <person name="Sankawa U."/>
            <person name="Ebizuka Y."/>
        </authorList>
    </citation>
    <scope>NUCLEOTIDE SEQUENCE [MRNA] (ISOFORM 1)</scope>
    <source>
        <tissue>Fetal liver</tissue>
    </source>
</reference>
<reference key="3">
    <citation type="journal article" date="2004" name="Nat. Genet.">
        <title>Complete sequencing and characterization of 21,243 full-length human cDNAs.</title>
        <authorList>
            <person name="Ota T."/>
            <person name="Suzuki Y."/>
            <person name="Nishikawa T."/>
            <person name="Otsuki T."/>
            <person name="Sugiyama T."/>
            <person name="Irie R."/>
            <person name="Wakamatsu A."/>
            <person name="Hayashi K."/>
            <person name="Sato H."/>
            <person name="Nagai K."/>
            <person name="Kimura K."/>
            <person name="Makita H."/>
            <person name="Sekine M."/>
            <person name="Obayashi M."/>
            <person name="Nishi T."/>
            <person name="Shibahara T."/>
            <person name="Tanaka T."/>
            <person name="Ishii S."/>
            <person name="Yamamoto J."/>
            <person name="Saito K."/>
            <person name="Kawai Y."/>
            <person name="Isono Y."/>
            <person name="Nakamura Y."/>
            <person name="Nagahari K."/>
            <person name="Murakami K."/>
            <person name="Yasuda T."/>
            <person name="Iwayanagi T."/>
            <person name="Wagatsuma M."/>
            <person name="Shiratori A."/>
            <person name="Sudo H."/>
            <person name="Hosoiri T."/>
            <person name="Kaku Y."/>
            <person name="Kodaira H."/>
            <person name="Kondo H."/>
            <person name="Sugawara M."/>
            <person name="Takahashi M."/>
            <person name="Kanda K."/>
            <person name="Yokoi T."/>
            <person name="Furuya T."/>
            <person name="Kikkawa E."/>
            <person name="Omura Y."/>
            <person name="Abe K."/>
            <person name="Kamihara K."/>
            <person name="Katsuta N."/>
            <person name="Sato K."/>
            <person name="Tanikawa M."/>
            <person name="Yamazaki M."/>
            <person name="Ninomiya K."/>
            <person name="Ishibashi T."/>
            <person name="Yamashita H."/>
            <person name="Murakawa K."/>
            <person name="Fujimori K."/>
            <person name="Tanai H."/>
            <person name="Kimata M."/>
            <person name="Watanabe M."/>
            <person name="Hiraoka S."/>
            <person name="Chiba Y."/>
            <person name="Ishida S."/>
            <person name="Ono Y."/>
            <person name="Takiguchi S."/>
            <person name="Watanabe S."/>
            <person name="Yosida M."/>
            <person name="Hotuta T."/>
            <person name="Kusano J."/>
            <person name="Kanehori K."/>
            <person name="Takahashi-Fujii A."/>
            <person name="Hara H."/>
            <person name="Tanase T.-O."/>
            <person name="Nomura Y."/>
            <person name="Togiya S."/>
            <person name="Komai F."/>
            <person name="Hara R."/>
            <person name="Takeuchi K."/>
            <person name="Arita M."/>
            <person name="Imose N."/>
            <person name="Musashino K."/>
            <person name="Yuuki H."/>
            <person name="Oshima A."/>
            <person name="Sasaki N."/>
            <person name="Aotsuka S."/>
            <person name="Yoshikawa Y."/>
            <person name="Matsunawa H."/>
            <person name="Ichihara T."/>
            <person name="Shiohata N."/>
            <person name="Sano S."/>
            <person name="Moriya S."/>
            <person name="Momiyama H."/>
            <person name="Satoh N."/>
            <person name="Takami S."/>
            <person name="Terashima Y."/>
            <person name="Suzuki O."/>
            <person name="Nakagawa S."/>
            <person name="Senoh A."/>
            <person name="Mizoguchi H."/>
            <person name="Goto Y."/>
            <person name="Shimizu F."/>
            <person name="Wakebe H."/>
            <person name="Hishigaki H."/>
            <person name="Watanabe T."/>
            <person name="Sugiyama A."/>
            <person name="Takemoto M."/>
            <person name="Kawakami B."/>
            <person name="Yamazaki M."/>
            <person name="Watanabe K."/>
            <person name="Kumagai A."/>
            <person name="Itakura S."/>
            <person name="Fukuzumi Y."/>
            <person name="Fujimori Y."/>
            <person name="Komiyama M."/>
            <person name="Tashiro H."/>
            <person name="Tanigami A."/>
            <person name="Fujiwara T."/>
            <person name="Ono T."/>
            <person name="Yamada K."/>
            <person name="Fujii Y."/>
            <person name="Ozaki K."/>
            <person name="Hirao M."/>
            <person name="Ohmori Y."/>
            <person name="Kawabata A."/>
            <person name="Hikiji T."/>
            <person name="Kobatake N."/>
            <person name="Inagaki H."/>
            <person name="Ikema Y."/>
            <person name="Okamoto S."/>
            <person name="Okitani R."/>
            <person name="Kawakami T."/>
            <person name="Noguchi S."/>
            <person name="Itoh T."/>
            <person name="Shigeta K."/>
            <person name="Senba T."/>
            <person name="Matsumura K."/>
            <person name="Nakajima Y."/>
            <person name="Mizuno T."/>
            <person name="Morinaga M."/>
            <person name="Sasaki M."/>
            <person name="Togashi T."/>
            <person name="Oyama M."/>
            <person name="Hata H."/>
            <person name="Watanabe M."/>
            <person name="Komatsu T."/>
            <person name="Mizushima-Sugano J."/>
            <person name="Satoh T."/>
            <person name="Shirai Y."/>
            <person name="Takahashi Y."/>
            <person name="Nakagawa K."/>
            <person name="Okumura K."/>
            <person name="Nagase T."/>
            <person name="Nomura N."/>
            <person name="Kikuchi H."/>
            <person name="Masuho Y."/>
            <person name="Yamashita R."/>
            <person name="Nakai K."/>
            <person name="Yada T."/>
            <person name="Nakamura Y."/>
            <person name="Ohara O."/>
            <person name="Isogai T."/>
            <person name="Sugano S."/>
        </authorList>
    </citation>
    <scope>NUCLEOTIDE SEQUENCE [LARGE SCALE MRNA] (ISOFORM 3)</scope>
    <scope>VARIANT VAL-642</scope>
    <source>
        <tissue>Thalamus</tissue>
    </source>
</reference>
<reference key="4">
    <citation type="journal article" date="1999" name="Hum. Genet.">
        <title>Structure of the human lanosterol synthase gene and its analysis as a candidate for holoprosencephaly.</title>
        <authorList>
            <person name="Roessler E."/>
            <person name="Mittaz L."/>
            <person name="Du Y."/>
            <person name="Scott H.S."/>
            <person name="Chang J."/>
            <person name="Rossier C."/>
            <person name="Guipponi M."/>
            <person name="Matsuda S.P."/>
            <person name="Muenke M."/>
            <person name="Antonarakis S.E."/>
        </authorList>
    </citation>
    <scope>NUCLEOTIDE SEQUENCE [GENOMIC DNA]</scope>
</reference>
<reference key="5">
    <citation type="submission" date="2006-07" db="EMBL/GenBank/DDBJ databases">
        <authorList>
            <person name="Totoki Y."/>
            <person name="Toyoda A."/>
            <person name="Takeda T."/>
            <person name="Sakaki Y."/>
            <person name="Tanaka A."/>
            <person name="Yokoyama S."/>
            <person name="Ohara O."/>
            <person name="Nagase T."/>
            <person name="Kikuno R.F."/>
        </authorList>
    </citation>
    <scope>NUCLEOTIDE SEQUENCE [LARGE SCALE MRNA] (ISOFORM 2)</scope>
    <scope>VARIANT VAL-642</scope>
    <source>
        <tissue>Brain</tissue>
    </source>
</reference>
<reference key="6">
    <citation type="journal article" date="2000" name="Nature">
        <title>The DNA sequence of human chromosome 21.</title>
        <authorList>
            <person name="Hattori M."/>
            <person name="Fujiyama A."/>
            <person name="Taylor T.D."/>
            <person name="Watanabe H."/>
            <person name="Yada T."/>
            <person name="Park H.-S."/>
            <person name="Toyoda A."/>
            <person name="Ishii K."/>
            <person name="Totoki Y."/>
            <person name="Choi D.-K."/>
            <person name="Groner Y."/>
            <person name="Soeda E."/>
            <person name="Ohki M."/>
            <person name="Takagi T."/>
            <person name="Sakaki Y."/>
            <person name="Taudien S."/>
            <person name="Blechschmidt K."/>
            <person name="Polley A."/>
            <person name="Menzel U."/>
            <person name="Delabar J."/>
            <person name="Kumpf K."/>
            <person name="Lehmann R."/>
            <person name="Patterson D."/>
            <person name="Reichwald K."/>
            <person name="Rump A."/>
            <person name="Schillhabel M."/>
            <person name="Schudy A."/>
            <person name="Zimmermann W."/>
            <person name="Rosenthal A."/>
            <person name="Kudoh J."/>
            <person name="Shibuya K."/>
            <person name="Kawasaki K."/>
            <person name="Asakawa S."/>
            <person name="Shintani A."/>
            <person name="Sasaki T."/>
            <person name="Nagamine K."/>
            <person name="Mitsuyama S."/>
            <person name="Antonarakis S.E."/>
            <person name="Minoshima S."/>
            <person name="Shimizu N."/>
            <person name="Nordsiek G."/>
            <person name="Hornischer K."/>
            <person name="Brandt P."/>
            <person name="Scharfe M."/>
            <person name="Schoen O."/>
            <person name="Desario A."/>
            <person name="Reichelt J."/>
            <person name="Kauer G."/>
            <person name="Bloecker H."/>
            <person name="Ramser J."/>
            <person name="Beck A."/>
            <person name="Klages S."/>
            <person name="Hennig S."/>
            <person name="Riesselmann L."/>
            <person name="Dagand E."/>
            <person name="Wehrmeyer S."/>
            <person name="Borzym K."/>
            <person name="Gardiner K."/>
            <person name="Nizetic D."/>
            <person name="Francis F."/>
            <person name="Lehrach H."/>
            <person name="Reinhardt R."/>
            <person name="Yaspo M.-L."/>
        </authorList>
    </citation>
    <scope>NUCLEOTIDE SEQUENCE [LARGE SCALE GENOMIC DNA]</scope>
</reference>
<reference key="7">
    <citation type="submission" date="2005-09" db="EMBL/GenBank/DDBJ databases">
        <authorList>
            <person name="Mural R.J."/>
            <person name="Istrail S."/>
            <person name="Sutton G.G."/>
            <person name="Florea L."/>
            <person name="Halpern A.L."/>
            <person name="Mobarry C.M."/>
            <person name="Lippert R."/>
            <person name="Walenz B."/>
            <person name="Shatkay H."/>
            <person name="Dew I."/>
            <person name="Miller J.R."/>
            <person name="Flanigan M.J."/>
            <person name="Edwards N.J."/>
            <person name="Bolanos R."/>
            <person name="Fasulo D."/>
            <person name="Halldorsson B.V."/>
            <person name="Hannenhalli S."/>
            <person name="Turner R."/>
            <person name="Yooseph S."/>
            <person name="Lu F."/>
            <person name="Nusskern D.R."/>
            <person name="Shue B.C."/>
            <person name="Zheng X.H."/>
            <person name="Zhong F."/>
            <person name="Delcher A.L."/>
            <person name="Huson D.H."/>
            <person name="Kravitz S.A."/>
            <person name="Mouchard L."/>
            <person name="Reinert K."/>
            <person name="Remington K.A."/>
            <person name="Clark A.G."/>
            <person name="Waterman M.S."/>
            <person name="Eichler E.E."/>
            <person name="Adams M.D."/>
            <person name="Hunkapiller M.W."/>
            <person name="Myers E.W."/>
            <person name="Venter J.C."/>
        </authorList>
    </citation>
    <scope>NUCLEOTIDE SEQUENCE [LARGE SCALE GENOMIC DNA]</scope>
</reference>
<reference key="8">
    <citation type="journal article" date="2004" name="Genome Res.">
        <title>The status, quality, and expansion of the NIH full-length cDNA project: the Mammalian Gene Collection (MGC).</title>
        <authorList>
            <consortium name="The MGC Project Team"/>
        </authorList>
    </citation>
    <scope>NUCLEOTIDE SEQUENCE [LARGE SCALE MRNA] (ISOFORM 1)</scope>
    <scope>VARIANT VAL-642</scope>
    <source>
        <tissue>Eye</tissue>
    </source>
</reference>
<reference key="9">
    <citation type="journal article" date="2004" name="Biochem. Biophys. Res. Commun.">
        <title>The monotopic membrane protein human oxidosqualene cyclase is active as monomer.</title>
        <authorList>
            <person name="Ruf A."/>
            <person name="Muller F."/>
            <person name="D'Arcy B."/>
            <person name="Stihle M."/>
            <person name="Kusznir E."/>
            <person name="Handschin C."/>
            <person name="Morand O.H."/>
            <person name="Thoma R."/>
        </authorList>
    </citation>
    <scope>PROTEIN SEQUENCE OF 2-5</scope>
    <scope>CATALYTIC ACTIVITY</scope>
    <scope>SUBUNIT</scope>
    <scope>SUBCELLULAR LOCATION</scope>
    <scope>FUNCTION</scope>
</reference>
<reference key="10">
    <citation type="journal article" date="1996" name="Hum. Genet.">
        <title>The human lanosterol synthase gene maps to chromosome 21q22.3.</title>
        <authorList>
            <person name="Young M."/>
            <person name="Chen H."/>
            <person name="Lalioti M.D."/>
            <person name="Antonarakis S.E."/>
        </authorList>
    </citation>
    <scope>NUCLEOTIDE SEQUENCE [MRNA] OF 41-630 (ISOFORM 1)</scope>
    <source>
        <tissue>Fetal brain</tissue>
    </source>
</reference>
<reference key="11">
    <citation type="journal article" date="2011" name="BMC Syst. Biol.">
        <title>Initial characterization of the human central proteome.</title>
        <authorList>
            <person name="Burkard T.R."/>
            <person name="Planyavsky M."/>
            <person name="Kaupe I."/>
            <person name="Breitwieser F.P."/>
            <person name="Buerckstuemmer T."/>
            <person name="Bennett K.L."/>
            <person name="Superti-Furga G."/>
            <person name="Colinge J."/>
        </authorList>
    </citation>
    <scope>IDENTIFICATION BY MASS SPECTROMETRY [LARGE SCALE ANALYSIS]</scope>
</reference>
<reference key="12">
    <citation type="journal article" date="2012" name="Proc. Natl. Acad. Sci. U.S.A.">
        <title>N-terminal acetylome analyses and functional insights of the N-terminal acetyltransferase NatB.</title>
        <authorList>
            <person name="Van Damme P."/>
            <person name="Lasa M."/>
            <person name="Polevoda B."/>
            <person name="Gazquez C."/>
            <person name="Elosegui-Artola A."/>
            <person name="Kim D.S."/>
            <person name="De Juan-Pardo E."/>
            <person name="Demeyer K."/>
            <person name="Hole K."/>
            <person name="Larrea E."/>
            <person name="Timmerman E."/>
            <person name="Prieto J."/>
            <person name="Arnesen T."/>
            <person name="Sherman F."/>
            <person name="Gevaert K."/>
            <person name="Aldabe R."/>
        </authorList>
    </citation>
    <scope>ACETYLATION [LARGE SCALE ANALYSIS] AT THR-2</scope>
    <scope>CLEAVAGE OF INITIATOR METHIONINE [LARGE SCALE ANALYSIS]</scope>
    <scope>IDENTIFICATION BY MASS SPECTROMETRY [LARGE SCALE ANALYSIS]</scope>
</reference>
<reference key="13">
    <citation type="journal article" date="2014" name="J. Proteomics">
        <title>An enzyme assisted RP-RPLC approach for in-depth analysis of human liver phosphoproteome.</title>
        <authorList>
            <person name="Bian Y."/>
            <person name="Song C."/>
            <person name="Cheng K."/>
            <person name="Dong M."/>
            <person name="Wang F."/>
            <person name="Huang J."/>
            <person name="Sun D."/>
            <person name="Wang L."/>
            <person name="Ye M."/>
            <person name="Zou H."/>
        </authorList>
    </citation>
    <scope>IDENTIFICATION BY MASS SPECTROMETRY [LARGE SCALE ANALYSIS]</scope>
    <source>
        <tissue>Liver</tissue>
    </source>
</reference>
<reference key="14">
    <citation type="journal article" date="2015" name="Nature">
        <title>Lanosterol reverses protein aggregation in cataracts.</title>
        <authorList>
            <person name="Zhao L."/>
            <person name="Chen X.J."/>
            <person name="Zhu J."/>
            <person name="Xi Y.B."/>
            <person name="Yang X."/>
            <person name="Hu L.D."/>
            <person name="Ouyang H."/>
            <person name="Patel S.H."/>
            <person name="Jin X."/>
            <person name="Lin D."/>
            <person name="Wu F."/>
            <person name="Flagg K."/>
            <person name="Cai H."/>
            <person name="Li G."/>
            <person name="Cao G."/>
            <person name="Lin Y."/>
            <person name="Chen D."/>
            <person name="Wen C."/>
            <person name="Chung C."/>
            <person name="Wang Y."/>
            <person name="Qiu A."/>
            <person name="Yeh E."/>
            <person name="Wang W."/>
            <person name="Hu X."/>
            <person name="Grob S."/>
            <person name="Abagyan R."/>
            <person name="Su Z."/>
            <person name="Tjondro H.C."/>
            <person name="Zhao X.J."/>
            <person name="Luo H."/>
            <person name="Hou R."/>
            <person name="Perry J.J."/>
            <person name="Gao W."/>
            <person name="Kozak I."/>
            <person name="Granet D."/>
            <person name="Li Y."/>
            <person name="Sun X."/>
            <person name="Wang J."/>
            <person name="Zhang L."/>
            <person name="Liu Y."/>
            <person name="Yan Y.B."/>
            <person name="Zhang K."/>
        </authorList>
    </citation>
    <scope>FUNCTION</scope>
    <scope>INVOLVEMENT IN CTRCT44</scope>
    <scope>VARIANTS CTRCT44 ARG-581 AND SER-588</scope>
    <scope>CHARACTERIZATION OF VARIANTS CTRCT44 ARG-581 AND SER-588</scope>
    <scope>CATALYTIC ACTIVITY</scope>
</reference>
<reference key="15">
    <citation type="journal article" date="2015" name="Proteomics">
        <title>N-terminome analysis of the human mitochondrial proteome.</title>
        <authorList>
            <person name="Vaca Jacome A.S."/>
            <person name="Rabilloud T."/>
            <person name="Schaeffer-Reiss C."/>
            <person name="Rompais M."/>
            <person name="Ayoub D."/>
            <person name="Lane L."/>
            <person name="Bairoch A."/>
            <person name="Van Dorsselaer A."/>
            <person name="Carapito C."/>
        </authorList>
    </citation>
    <scope>IDENTIFICATION BY MASS SPECTROMETRY [LARGE SCALE ANALYSIS]</scope>
</reference>
<reference key="16">
    <citation type="journal article" date="2017" name="J. Pediatr. Endocrinol. Metab.">
        <title>Congenital cataract with LSS gene mutations: a new case report.</title>
        <authorList>
            <person name="Chen X."/>
            <person name="Liu L."/>
        </authorList>
    </citation>
    <scope>VARIANTS CTRCT44 SER-342 AND CYS-629</scope>
</reference>
<reference key="17">
    <citation type="journal article" date="2018" name="Am. J. Hum. Genet.">
        <title>Bi-allelic mutations in LSS, encoding lanosterol synthase, cause autosomal-recessive hypotrichosis simplex.</title>
        <authorList>
            <person name="Romano M.T."/>
            <person name="Tafazzoli A."/>
            <person name="Mattern M."/>
            <person name="Sivalingam S."/>
            <person name="Wolf S."/>
            <person name="Rupp A."/>
            <person name="Thiele H."/>
            <person name="Altmueller J."/>
            <person name="Nuernberg P."/>
            <person name="Ellwanger J."/>
            <person name="Gambon R."/>
            <person name="Baumer A."/>
            <person name="Kohlschmidt N."/>
            <person name="Metze D."/>
            <person name="Holdenrieder S."/>
            <person name="Paus R."/>
            <person name="Luetjohann D."/>
            <person name="Frank J."/>
            <person name="Geyer M."/>
            <person name="Bertolini M."/>
            <person name="Kokordelis P."/>
            <person name="Betz R.C."/>
        </authorList>
    </citation>
    <scope>TISSUE SPECIFICITY</scope>
    <scope>SUBCELLULAR LOCATION</scope>
    <scope>INVOLVEMENT IN HYPT14</scope>
    <scope>INVOLVEMENT IN APMR4</scope>
    <scope>VARIANTS HYPT14 VAL-102; PRO-248 AND SER-391</scope>
    <scope>VARIANTS APMR4 141-TRP--PRO-732 DEL AND TYR-209</scope>
    <scope>CHARACTERIZATION OF VARIANTS HYPT14 VAL-102; PRO-248 AND SER-391</scope>
    <scope>CHARACTERIZATION OF VARIANTS APMR4 141-TRP--PRO-732 DEL AND TYR-209</scope>
</reference>
<reference key="18">
    <citation type="journal article" date="2019" name="Genet. Med.">
        <title>Biallelic pathogenic variants in the lanosterol synthase gene LSS involved in the cholesterol biosynthesis cause alopecia with intellectual disability, a rare recessive neuroectodermal syndrome.</title>
        <authorList>
            <person name="Besnard T."/>
            <person name="Sloboda N."/>
            <person name="Goldenberg A."/>
            <person name="Kuery S."/>
            <person name="Cogne B."/>
            <person name="Breheret F."/>
            <person name="Trochu E."/>
            <person name="Conrad S."/>
            <person name="Vincent M."/>
            <person name="Deb W."/>
            <person name="Balguerie X."/>
            <person name="Barbarot S."/>
            <person name="Baujat G."/>
            <person name="Ben-Omran T."/>
            <person name="Bursztejn A.C."/>
            <person name="Carmignac V."/>
            <person name="Datta A.N."/>
            <person name="Delignieres A."/>
            <person name="Faivre L."/>
            <person name="Gardie B."/>
            <person name="Gueant J.L."/>
            <person name="Kuentz P."/>
            <person name="Lenglet M."/>
            <person name="Nassogne M.C."/>
            <person name="Ramaekers V."/>
            <person name="Schnur R.E."/>
            <person name="Si Y."/>
            <person name="Torti E."/>
            <person name="Thevenon J."/>
            <person name="Vabres P."/>
            <person name="Van Maldergem L."/>
            <person name="Wand D."/>
            <person name="Wiedemann A."/>
            <person name="Cariou B."/>
            <person name="Redon R."/>
            <person name="Lamaziere A."/>
            <person name="Bezieau S."/>
            <person name="Feillet F."/>
            <person name="Isidor B."/>
        </authorList>
    </citation>
    <scope>INVOLVEMENT IN APMR4</scope>
    <scope>VARIANTS APMR4 ASP-12; CYS-14; PRO-260; CYS-286; SER-516; 604-ARG--PRO-732 DEL; ILE-652 AND LYS-705</scope>
</reference>
<reference key="19">
    <citation type="journal article" date="2004" name="Nature">
        <title>Insight into steroid scaffold formation from the structure of human oxidosqualene cyclase.</title>
        <authorList>
            <person name="Thoma R."/>
            <person name="Schulz-Gasch T."/>
            <person name="D'Arcy B."/>
            <person name="Benz J."/>
            <person name="Aebi J."/>
            <person name="Dehmlow H."/>
            <person name="Hennig M."/>
            <person name="Stihle M."/>
            <person name="Ruf A."/>
        </authorList>
    </citation>
    <scope>X-RAY CRYSTALLOGRAPHY (2.2 ANGSTROMS) IN COMPLEXES WITH LANOSTEROL AND RO 48-807</scope>
    <scope>SUBCELLULAR LOCATION</scope>
    <scope>ACTIVE SITE</scope>
</reference>
<organism>
    <name type="scientific">Homo sapiens</name>
    <name type="common">Human</name>
    <dbReference type="NCBI Taxonomy" id="9606"/>
    <lineage>
        <taxon>Eukaryota</taxon>
        <taxon>Metazoa</taxon>
        <taxon>Chordata</taxon>
        <taxon>Craniata</taxon>
        <taxon>Vertebrata</taxon>
        <taxon>Euteleostomi</taxon>
        <taxon>Mammalia</taxon>
        <taxon>Eutheria</taxon>
        <taxon>Euarchontoglires</taxon>
        <taxon>Primates</taxon>
        <taxon>Haplorrhini</taxon>
        <taxon>Catarrhini</taxon>
        <taxon>Hominidae</taxon>
        <taxon>Homo</taxon>
    </lineage>
</organism>
<accession>P48449</accession>
<accession>B4DJZ9</accession>
<accession>D3DSN0</accession>
<accession>E9PEI9</accession>
<accession>G5E9Q9</accession>
<accession>Q8IYL6</accession>
<accession>Q9UEZ1</accession>
<evidence type="ECO:0000255" key="1"/>
<evidence type="ECO:0000269" key="2">
    <source>
    </source>
</evidence>
<evidence type="ECO:0000269" key="3">
    <source>
    </source>
</evidence>
<evidence type="ECO:0000269" key="4">
    <source>
    </source>
</evidence>
<evidence type="ECO:0000269" key="5">
    <source>
    </source>
</evidence>
<evidence type="ECO:0000269" key="6">
    <source>
    </source>
</evidence>
<evidence type="ECO:0000269" key="7">
    <source>
    </source>
</evidence>
<evidence type="ECO:0000269" key="8">
    <source>
    </source>
</evidence>
<evidence type="ECO:0000269" key="9">
    <source>
    </source>
</evidence>
<evidence type="ECO:0000269" key="10">
    <source>
    </source>
</evidence>
<evidence type="ECO:0000269" key="11">
    <source ref="5"/>
</evidence>
<evidence type="ECO:0000303" key="12">
    <source>
    </source>
</evidence>
<evidence type="ECO:0000303" key="13">
    <source ref="5"/>
</evidence>
<evidence type="ECO:0000305" key="14"/>
<evidence type="ECO:0000305" key="15">
    <source>
    </source>
</evidence>
<evidence type="ECO:0000305" key="16">
    <source>
    </source>
</evidence>
<evidence type="ECO:0007744" key="17">
    <source>
    </source>
</evidence>
<evidence type="ECO:0007829" key="18">
    <source>
        <dbReference type="PDB" id="1W6J"/>
    </source>
</evidence>
<evidence type="ECO:0007829" key="19">
    <source>
        <dbReference type="PDB" id="1W6K"/>
    </source>
</evidence>
<name>LSS_HUMAN</name>
<gene>
    <name type="primary">LSS</name>
    <name type="synonym">OSC</name>
</gene>
<proteinExistence type="evidence at protein level"/>
<dbReference type="EC" id="5.4.99.7" evidence="3 6 10"/>
<dbReference type="EMBL" id="U22526">
    <property type="protein sequence ID" value="AAC50184.1"/>
    <property type="molecule type" value="mRNA"/>
</dbReference>
<dbReference type="EMBL" id="D63807">
    <property type="protein sequence ID" value="BAA09875.1"/>
    <property type="molecule type" value="mRNA"/>
</dbReference>
<dbReference type="EMBL" id="S81221">
    <property type="protein sequence ID" value="AAB36220.1"/>
    <property type="molecule type" value="mRNA"/>
</dbReference>
<dbReference type="EMBL" id="AJ239031">
    <property type="protein sequence ID" value="CAB42828.1"/>
    <property type="molecule type" value="Genomic_DNA"/>
</dbReference>
<dbReference type="EMBL" id="AJ239021">
    <property type="protein sequence ID" value="CAB42828.1"/>
    <property type="status" value="JOINED"/>
    <property type="molecule type" value="Genomic_DNA"/>
</dbReference>
<dbReference type="EMBL" id="AJ239022">
    <property type="protein sequence ID" value="CAB42828.1"/>
    <property type="status" value="JOINED"/>
    <property type="molecule type" value="Genomic_DNA"/>
</dbReference>
<dbReference type="EMBL" id="AJ239023">
    <property type="protein sequence ID" value="CAB42828.1"/>
    <property type="status" value="JOINED"/>
    <property type="molecule type" value="Genomic_DNA"/>
</dbReference>
<dbReference type="EMBL" id="AJ239024">
    <property type="protein sequence ID" value="CAB42828.1"/>
    <property type="status" value="JOINED"/>
    <property type="molecule type" value="Genomic_DNA"/>
</dbReference>
<dbReference type="EMBL" id="AJ239025">
    <property type="protein sequence ID" value="CAB42828.1"/>
    <property type="status" value="JOINED"/>
    <property type="molecule type" value="Genomic_DNA"/>
</dbReference>
<dbReference type="EMBL" id="AJ239026">
    <property type="protein sequence ID" value="CAB42828.1"/>
    <property type="status" value="JOINED"/>
    <property type="molecule type" value="Genomic_DNA"/>
</dbReference>
<dbReference type="EMBL" id="AJ239027">
    <property type="protein sequence ID" value="CAB42828.1"/>
    <property type="status" value="JOINED"/>
    <property type="molecule type" value="Genomic_DNA"/>
</dbReference>
<dbReference type="EMBL" id="AJ239028">
    <property type="protein sequence ID" value="CAB42828.1"/>
    <property type="status" value="JOINED"/>
    <property type="molecule type" value="Genomic_DNA"/>
</dbReference>
<dbReference type="EMBL" id="AJ239029">
    <property type="protein sequence ID" value="CAB42828.1"/>
    <property type="status" value="JOINED"/>
    <property type="molecule type" value="Genomic_DNA"/>
</dbReference>
<dbReference type="EMBL" id="AJ239030">
    <property type="protein sequence ID" value="CAB42828.1"/>
    <property type="status" value="JOINED"/>
    <property type="molecule type" value="Genomic_DNA"/>
</dbReference>
<dbReference type="EMBL" id="AK296313">
    <property type="protein sequence ID" value="BAG59011.1"/>
    <property type="molecule type" value="mRNA"/>
</dbReference>
<dbReference type="EMBL" id="AK226141">
    <property type="status" value="NOT_ANNOTATED_CDS"/>
    <property type="molecule type" value="mRNA"/>
</dbReference>
<dbReference type="EMBL" id="AP001468">
    <property type="status" value="NOT_ANNOTATED_CDS"/>
    <property type="molecule type" value="Genomic_DNA"/>
</dbReference>
<dbReference type="EMBL" id="AP001469">
    <property type="status" value="NOT_ANNOTATED_CDS"/>
    <property type="molecule type" value="Genomic_DNA"/>
</dbReference>
<dbReference type="EMBL" id="CH471079">
    <property type="protein sequence ID" value="EAX09299.1"/>
    <property type="molecule type" value="Genomic_DNA"/>
</dbReference>
<dbReference type="EMBL" id="CH471079">
    <property type="protein sequence ID" value="EAX09301.1"/>
    <property type="molecule type" value="Genomic_DNA"/>
</dbReference>
<dbReference type="EMBL" id="CH471079">
    <property type="protein sequence ID" value="EAX09302.1"/>
    <property type="molecule type" value="Genomic_DNA"/>
</dbReference>
<dbReference type="EMBL" id="CH471079">
    <property type="protein sequence ID" value="EAX09303.1"/>
    <property type="molecule type" value="Genomic_DNA"/>
</dbReference>
<dbReference type="EMBL" id="BC035638">
    <property type="protein sequence ID" value="AAH35638.1"/>
    <property type="molecule type" value="mRNA"/>
</dbReference>
<dbReference type="EMBL" id="X87809">
    <property type="protein sequence ID" value="CAA61078.1"/>
    <property type="molecule type" value="mRNA"/>
</dbReference>
<dbReference type="CCDS" id="CCDS13733.1">
    <molecule id="P48449-1"/>
</dbReference>
<dbReference type="CCDS" id="CCDS46654.1">
    <molecule id="P48449-3"/>
</dbReference>
<dbReference type="CCDS" id="CCDS54489.1">
    <molecule id="P48449-2"/>
</dbReference>
<dbReference type="PIR" id="JC4194">
    <property type="entry name" value="JC4194"/>
</dbReference>
<dbReference type="RefSeq" id="NP_001001438.1">
    <molecule id="P48449-1"/>
    <property type="nucleotide sequence ID" value="NM_001001438.3"/>
</dbReference>
<dbReference type="RefSeq" id="NP_001138908.1">
    <molecule id="P48449-3"/>
    <property type="nucleotide sequence ID" value="NM_001145436.2"/>
</dbReference>
<dbReference type="RefSeq" id="NP_001138909.1">
    <molecule id="P48449-2"/>
    <property type="nucleotide sequence ID" value="NM_001145437.2"/>
</dbReference>
<dbReference type="RefSeq" id="NP_002331.3">
    <molecule id="P48449-1"/>
    <property type="nucleotide sequence ID" value="NM_002340.5"/>
</dbReference>
<dbReference type="RefSeq" id="XP_016883835.1">
    <property type="nucleotide sequence ID" value="XM_017028346.1"/>
</dbReference>
<dbReference type="RefSeq" id="XP_016883836.1">
    <property type="nucleotide sequence ID" value="XM_017028347.1"/>
</dbReference>
<dbReference type="PDB" id="1W6J">
    <property type="method" value="X-ray"/>
    <property type="resolution" value="2.20 A"/>
    <property type="chains" value="A=1-732"/>
</dbReference>
<dbReference type="PDB" id="1W6K">
    <property type="method" value="X-ray"/>
    <property type="resolution" value="2.10 A"/>
    <property type="chains" value="A=1-732"/>
</dbReference>
<dbReference type="PDBsum" id="1W6J"/>
<dbReference type="PDBsum" id="1W6K"/>
<dbReference type="SMR" id="P48449"/>
<dbReference type="BioGRID" id="110225">
    <property type="interactions" value="73"/>
</dbReference>
<dbReference type="FunCoup" id="P48449">
    <property type="interactions" value="530"/>
</dbReference>
<dbReference type="IntAct" id="P48449">
    <property type="interactions" value="47"/>
</dbReference>
<dbReference type="MINT" id="P48449"/>
<dbReference type="STRING" id="9606.ENSP00000380837"/>
<dbReference type="BindingDB" id="P48449"/>
<dbReference type="ChEMBL" id="CHEMBL3593"/>
<dbReference type="DrugBank" id="DB03696">
    <property type="generic name" value="Lanosterol"/>
</dbReference>
<dbReference type="DrugBank" id="DB02016">
    <property type="generic name" value="R048-8071"/>
</dbReference>
<dbReference type="GuidetoPHARMACOLOGY" id="2434"/>
<dbReference type="SwissLipids" id="SLP:000001308">
    <molecule id="P48449-1"/>
</dbReference>
<dbReference type="GlyGen" id="P48449">
    <property type="glycosylation" value="1 site, 1 O-linked glycan (1 site)"/>
</dbReference>
<dbReference type="iPTMnet" id="P48449"/>
<dbReference type="PhosphoSitePlus" id="P48449"/>
<dbReference type="SwissPalm" id="P48449"/>
<dbReference type="BioMuta" id="LSS"/>
<dbReference type="DMDM" id="1352387"/>
<dbReference type="jPOST" id="P48449"/>
<dbReference type="MassIVE" id="P48449"/>
<dbReference type="PaxDb" id="9606-ENSP00000380837"/>
<dbReference type="PeptideAtlas" id="P48449"/>
<dbReference type="ProteomicsDB" id="19902"/>
<dbReference type="ProteomicsDB" id="34015"/>
<dbReference type="ProteomicsDB" id="55893">
    <molecule id="P48449-1"/>
</dbReference>
<dbReference type="Pumba" id="P48449"/>
<dbReference type="Antibodypedia" id="24599">
    <property type="antibodies" value="159 antibodies from 28 providers"/>
</dbReference>
<dbReference type="DNASU" id="4047"/>
<dbReference type="Ensembl" id="ENST00000356396.8">
    <molecule id="P48449-1"/>
    <property type="protein sequence ID" value="ENSP00000348762.3"/>
    <property type="gene ID" value="ENSG00000160285.15"/>
</dbReference>
<dbReference type="Ensembl" id="ENST00000397728.8">
    <molecule id="P48449-1"/>
    <property type="protein sequence ID" value="ENSP00000380837.2"/>
    <property type="gene ID" value="ENSG00000160285.15"/>
</dbReference>
<dbReference type="Ensembl" id="ENST00000457828.6">
    <molecule id="P48449-2"/>
    <property type="protein sequence ID" value="ENSP00000409191.2"/>
    <property type="gene ID" value="ENSG00000160285.15"/>
</dbReference>
<dbReference type="Ensembl" id="ENST00000522411.5">
    <molecule id="P48449-3"/>
    <property type="protein sequence ID" value="ENSP00000429133.1"/>
    <property type="gene ID" value="ENSG00000160285.15"/>
</dbReference>
<dbReference type="GeneID" id="4047"/>
<dbReference type="KEGG" id="hsa:4047"/>
<dbReference type="MANE-Select" id="ENST00000397728.8">
    <property type="protein sequence ID" value="ENSP00000380837.2"/>
    <property type="RefSeq nucleotide sequence ID" value="NM_002340.6"/>
    <property type="RefSeq protein sequence ID" value="NP_002331.3"/>
</dbReference>
<dbReference type="UCSC" id="uc002zij.4">
    <molecule id="P48449-1"/>
    <property type="organism name" value="human"/>
</dbReference>
<dbReference type="AGR" id="HGNC:6708"/>
<dbReference type="CTD" id="4047"/>
<dbReference type="DisGeNET" id="4047"/>
<dbReference type="GeneCards" id="LSS"/>
<dbReference type="HGNC" id="HGNC:6708">
    <property type="gene designation" value="LSS"/>
</dbReference>
<dbReference type="HPA" id="ENSG00000160285">
    <property type="expression patterns" value="Low tissue specificity"/>
</dbReference>
<dbReference type="MalaCards" id="LSS"/>
<dbReference type="MIM" id="600909">
    <property type="type" value="gene"/>
</dbReference>
<dbReference type="MIM" id="616509">
    <property type="type" value="phenotype"/>
</dbReference>
<dbReference type="MIM" id="618275">
    <property type="type" value="phenotype"/>
</dbReference>
<dbReference type="MIM" id="618840">
    <property type="type" value="phenotype"/>
</dbReference>
<dbReference type="neXtProt" id="NX_P48449"/>
<dbReference type="OpenTargets" id="ENSG00000160285"/>
<dbReference type="Orphanet" id="2850">
    <property type="disease" value="Alopecia-intellectual disability syndrome"/>
</dbReference>
<dbReference type="Orphanet" id="1366">
    <property type="disease" value="Autosomal recessive palmoplantar keratoderma and congenital alopecia"/>
</dbReference>
<dbReference type="Orphanet" id="55654">
    <property type="disease" value="Hypotrichosis simplex"/>
</dbReference>
<dbReference type="Orphanet" id="98994">
    <property type="disease" value="Total early-onset cataract"/>
</dbReference>
<dbReference type="PharmGKB" id="PA30473"/>
<dbReference type="VEuPathDB" id="HostDB:ENSG00000160285"/>
<dbReference type="eggNOG" id="KOG0497">
    <property type="taxonomic scope" value="Eukaryota"/>
</dbReference>
<dbReference type="GeneTree" id="ENSGT00390000011570"/>
<dbReference type="HOGENOM" id="CLU_009074_2_1_1"/>
<dbReference type="InParanoid" id="P48449"/>
<dbReference type="OMA" id="CWARQTI"/>
<dbReference type="OrthoDB" id="21502at2759"/>
<dbReference type="PAN-GO" id="P48449">
    <property type="GO annotations" value="3 GO annotations based on evolutionary models"/>
</dbReference>
<dbReference type="PhylomeDB" id="P48449"/>
<dbReference type="TreeFam" id="TF300406"/>
<dbReference type="BioCyc" id="MetaCyc:HS08480-MONOMER"/>
<dbReference type="BRENDA" id="5.4.99.7">
    <property type="organism ID" value="2681"/>
</dbReference>
<dbReference type="PathwayCommons" id="P48449"/>
<dbReference type="Reactome" id="R-HSA-191273">
    <property type="pathway name" value="Cholesterol biosynthesis"/>
</dbReference>
<dbReference type="Reactome" id="R-HSA-2426168">
    <property type="pathway name" value="Activation of gene expression by SREBF (SREBP)"/>
</dbReference>
<dbReference type="SignaLink" id="P48449"/>
<dbReference type="UniPathway" id="UPA00767">
    <property type="reaction ID" value="UER00753"/>
</dbReference>
<dbReference type="BioGRID-ORCS" id="4047">
    <property type="hits" value="44 hits in 1173 CRISPR screens"/>
</dbReference>
<dbReference type="ChiTaRS" id="LSS">
    <property type="organism name" value="human"/>
</dbReference>
<dbReference type="EvolutionaryTrace" id="P48449"/>
<dbReference type="GeneWiki" id="Lanosterol_synthase"/>
<dbReference type="GenomeRNAi" id="4047"/>
<dbReference type="Pharos" id="P48449">
    <property type="development level" value="Tchem"/>
</dbReference>
<dbReference type="PRO" id="PR:P48449"/>
<dbReference type="Proteomes" id="UP000005640">
    <property type="component" value="Chromosome 21"/>
</dbReference>
<dbReference type="RNAct" id="P48449">
    <property type="molecule type" value="protein"/>
</dbReference>
<dbReference type="Bgee" id="ENSG00000160285">
    <property type="expression patterns" value="Expressed in mucosa of stomach and 98 other cell types or tissues"/>
</dbReference>
<dbReference type="ExpressionAtlas" id="P48449">
    <property type="expression patterns" value="baseline and differential"/>
</dbReference>
<dbReference type="GO" id="GO:0005789">
    <property type="term" value="C:endoplasmic reticulum membrane"/>
    <property type="evidence" value="ECO:0000314"/>
    <property type="project" value="UniProtKB"/>
</dbReference>
<dbReference type="GO" id="GO:0005811">
    <property type="term" value="C:lipid droplet"/>
    <property type="evidence" value="ECO:0000314"/>
    <property type="project" value="UniProtKB"/>
</dbReference>
<dbReference type="GO" id="GO:0016020">
    <property type="term" value="C:membrane"/>
    <property type="evidence" value="ECO:0007005"/>
    <property type="project" value="UniProtKB"/>
</dbReference>
<dbReference type="GO" id="GO:0000250">
    <property type="term" value="F:lanosterol synthase activity"/>
    <property type="evidence" value="ECO:0000315"/>
    <property type="project" value="UniProtKB"/>
</dbReference>
<dbReference type="GO" id="GO:0006695">
    <property type="term" value="P:cholesterol biosynthetic process"/>
    <property type="evidence" value="ECO:0000315"/>
    <property type="project" value="BHF-UCL"/>
</dbReference>
<dbReference type="GO" id="GO:0031647">
    <property type="term" value="P:regulation of protein stability"/>
    <property type="evidence" value="ECO:0000315"/>
    <property type="project" value="UniProtKB"/>
</dbReference>
<dbReference type="GO" id="GO:0006694">
    <property type="term" value="P:steroid biosynthetic process"/>
    <property type="evidence" value="ECO:0000315"/>
    <property type="project" value="UniProtKB"/>
</dbReference>
<dbReference type="GO" id="GO:0016104">
    <property type="term" value="P:triterpenoid biosynthetic process"/>
    <property type="evidence" value="ECO:0007669"/>
    <property type="project" value="InterPro"/>
</dbReference>
<dbReference type="CDD" id="cd02892">
    <property type="entry name" value="SQCY_1"/>
    <property type="match status" value="1"/>
</dbReference>
<dbReference type="FunFam" id="1.50.10.20:FF:000002">
    <property type="entry name" value="Terpene cyclase/mutase family member"/>
    <property type="match status" value="1"/>
</dbReference>
<dbReference type="FunFam" id="1.50.10.20:FF:000003">
    <property type="entry name" value="Terpene cyclase/mutase family member"/>
    <property type="match status" value="1"/>
</dbReference>
<dbReference type="Gene3D" id="1.50.10.20">
    <property type="match status" value="2"/>
</dbReference>
<dbReference type="Gene3D" id="6.20.120.20">
    <property type="match status" value="1"/>
</dbReference>
<dbReference type="InterPro" id="IPR032696">
    <property type="entry name" value="SQ_cyclase_C"/>
</dbReference>
<dbReference type="InterPro" id="IPR032697">
    <property type="entry name" value="SQ_cyclase_N"/>
</dbReference>
<dbReference type="InterPro" id="IPR018333">
    <property type="entry name" value="Squalene_cyclase"/>
</dbReference>
<dbReference type="InterPro" id="IPR002365">
    <property type="entry name" value="Terpene_synthase_CS"/>
</dbReference>
<dbReference type="InterPro" id="IPR008930">
    <property type="entry name" value="Terpenoid_cyclase/PrenylTrfase"/>
</dbReference>
<dbReference type="NCBIfam" id="TIGR01787">
    <property type="entry name" value="squalene_cyclas"/>
    <property type="match status" value="1"/>
</dbReference>
<dbReference type="PANTHER" id="PTHR11764:SF20">
    <property type="entry name" value="LANOSTEROL SYNTHASE"/>
    <property type="match status" value="1"/>
</dbReference>
<dbReference type="PANTHER" id="PTHR11764">
    <property type="entry name" value="TERPENE CYCLASE/MUTASE FAMILY MEMBER"/>
    <property type="match status" value="1"/>
</dbReference>
<dbReference type="Pfam" id="PF13243">
    <property type="entry name" value="SQHop_cyclase_C"/>
    <property type="match status" value="1"/>
</dbReference>
<dbReference type="Pfam" id="PF13249">
    <property type="entry name" value="SQHop_cyclase_N"/>
    <property type="match status" value="1"/>
</dbReference>
<dbReference type="SFLD" id="SFLDG01016">
    <property type="entry name" value="Prenyltransferase_Like_2"/>
    <property type="match status" value="1"/>
</dbReference>
<dbReference type="SUPFAM" id="SSF48239">
    <property type="entry name" value="Terpenoid cyclases/Protein prenyltransferases"/>
    <property type="match status" value="2"/>
</dbReference>
<dbReference type="PROSITE" id="PS01074">
    <property type="entry name" value="TERPENE_SYNTHASES"/>
    <property type="match status" value="1"/>
</dbReference>